<organism>
    <name type="scientific">Mus musculus</name>
    <name type="common">Mouse</name>
    <dbReference type="NCBI Taxonomy" id="10090"/>
    <lineage>
        <taxon>Eukaryota</taxon>
        <taxon>Metazoa</taxon>
        <taxon>Chordata</taxon>
        <taxon>Craniata</taxon>
        <taxon>Vertebrata</taxon>
        <taxon>Euteleostomi</taxon>
        <taxon>Mammalia</taxon>
        <taxon>Eutheria</taxon>
        <taxon>Euarchontoglires</taxon>
        <taxon>Glires</taxon>
        <taxon>Rodentia</taxon>
        <taxon>Myomorpha</taxon>
        <taxon>Muroidea</taxon>
        <taxon>Muridae</taxon>
        <taxon>Murinae</taxon>
        <taxon>Mus</taxon>
        <taxon>Mus</taxon>
    </lineage>
</organism>
<sequence>MSEKFEVKDLNMKPGMSLKIKGKIHNDVDRFLINLGQGKETLNLHFNPRFDESTIVCNTSEGGRWGQEQRENHMCFSPGSEVKITITFQDKDFKVTLPDGHQLTFPNRLGHNQLHYLSMGGLQISSFKLE</sequence>
<reference key="1">
    <citation type="journal article" date="2005" name="Science">
        <title>The transcriptional landscape of the mammalian genome.</title>
        <authorList>
            <person name="Carninci P."/>
            <person name="Kasukawa T."/>
            <person name="Katayama S."/>
            <person name="Gough J."/>
            <person name="Frith M.C."/>
            <person name="Maeda N."/>
            <person name="Oyama R."/>
            <person name="Ravasi T."/>
            <person name="Lenhard B."/>
            <person name="Wells C."/>
            <person name="Kodzius R."/>
            <person name="Shimokawa K."/>
            <person name="Bajic V.B."/>
            <person name="Brenner S.E."/>
            <person name="Batalov S."/>
            <person name="Forrest A.R."/>
            <person name="Zavolan M."/>
            <person name="Davis M.J."/>
            <person name="Wilming L.G."/>
            <person name="Aidinis V."/>
            <person name="Allen J.E."/>
            <person name="Ambesi-Impiombato A."/>
            <person name="Apweiler R."/>
            <person name="Aturaliya R.N."/>
            <person name="Bailey T.L."/>
            <person name="Bansal M."/>
            <person name="Baxter L."/>
            <person name="Beisel K.W."/>
            <person name="Bersano T."/>
            <person name="Bono H."/>
            <person name="Chalk A.M."/>
            <person name="Chiu K.P."/>
            <person name="Choudhary V."/>
            <person name="Christoffels A."/>
            <person name="Clutterbuck D.R."/>
            <person name="Crowe M.L."/>
            <person name="Dalla E."/>
            <person name="Dalrymple B.P."/>
            <person name="de Bono B."/>
            <person name="Della Gatta G."/>
            <person name="di Bernardo D."/>
            <person name="Down T."/>
            <person name="Engstrom P."/>
            <person name="Fagiolini M."/>
            <person name="Faulkner G."/>
            <person name="Fletcher C.F."/>
            <person name="Fukushima T."/>
            <person name="Furuno M."/>
            <person name="Futaki S."/>
            <person name="Gariboldi M."/>
            <person name="Georgii-Hemming P."/>
            <person name="Gingeras T.R."/>
            <person name="Gojobori T."/>
            <person name="Green R.E."/>
            <person name="Gustincich S."/>
            <person name="Harbers M."/>
            <person name="Hayashi Y."/>
            <person name="Hensch T.K."/>
            <person name="Hirokawa N."/>
            <person name="Hill D."/>
            <person name="Huminiecki L."/>
            <person name="Iacono M."/>
            <person name="Ikeo K."/>
            <person name="Iwama A."/>
            <person name="Ishikawa T."/>
            <person name="Jakt M."/>
            <person name="Kanapin A."/>
            <person name="Katoh M."/>
            <person name="Kawasawa Y."/>
            <person name="Kelso J."/>
            <person name="Kitamura H."/>
            <person name="Kitano H."/>
            <person name="Kollias G."/>
            <person name="Krishnan S.P."/>
            <person name="Kruger A."/>
            <person name="Kummerfeld S.K."/>
            <person name="Kurochkin I.V."/>
            <person name="Lareau L.F."/>
            <person name="Lazarevic D."/>
            <person name="Lipovich L."/>
            <person name="Liu J."/>
            <person name="Liuni S."/>
            <person name="McWilliam S."/>
            <person name="Madan Babu M."/>
            <person name="Madera M."/>
            <person name="Marchionni L."/>
            <person name="Matsuda H."/>
            <person name="Matsuzawa S."/>
            <person name="Miki H."/>
            <person name="Mignone F."/>
            <person name="Miyake S."/>
            <person name="Morris K."/>
            <person name="Mottagui-Tabar S."/>
            <person name="Mulder N."/>
            <person name="Nakano N."/>
            <person name="Nakauchi H."/>
            <person name="Ng P."/>
            <person name="Nilsson R."/>
            <person name="Nishiguchi S."/>
            <person name="Nishikawa S."/>
            <person name="Nori F."/>
            <person name="Ohara O."/>
            <person name="Okazaki Y."/>
            <person name="Orlando V."/>
            <person name="Pang K.C."/>
            <person name="Pavan W.J."/>
            <person name="Pavesi G."/>
            <person name="Pesole G."/>
            <person name="Petrovsky N."/>
            <person name="Piazza S."/>
            <person name="Reed J."/>
            <person name="Reid J.F."/>
            <person name="Ring B.Z."/>
            <person name="Ringwald M."/>
            <person name="Rost B."/>
            <person name="Ruan Y."/>
            <person name="Salzberg S.L."/>
            <person name="Sandelin A."/>
            <person name="Schneider C."/>
            <person name="Schoenbach C."/>
            <person name="Sekiguchi K."/>
            <person name="Semple C.A."/>
            <person name="Seno S."/>
            <person name="Sessa L."/>
            <person name="Sheng Y."/>
            <person name="Shibata Y."/>
            <person name="Shimada H."/>
            <person name="Shimada K."/>
            <person name="Silva D."/>
            <person name="Sinclair B."/>
            <person name="Sperling S."/>
            <person name="Stupka E."/>
            <person name="Sugiura K."/>
            <person name="Sultana R."/>
            <person name="Takenaka Y."/>
            <person name="Taki K."/>
            <person name="Tammoja K."/>
            <person name="Tan S.L."/>
            <person name="Tang S."/>
            <person name="Taylor M.S."/>
            <person name="Tegner J."/>
            <person name="Teichmann S.A."/>
            <person name="Ueda H.R."/>
            <person name="van Nimwegen E."/>
            <person name="Verardo R."/>
            <person name="Wei C.L."/>
            <person name="Yagi K."/>
            <person name="Yamanishi H."/>
            <person name="Zabarovsky E."/>
            <person name="Zhu S."/>
            <person name="Zimmer A."/>
            <person name="Hide W."/>
            <person name="Bult C."/>
            <person name="Grimmond S.M."/>
            <person name="Teasdale R.D."/>
            <person name="Liu E.T."/>
            <person name="Brusic V."/>
            <person name="Quackenbush J."/>
            <person name="Wahlestedt C."/>
            <person name="Mattick J.S."/>
            <person name="Hume D.A."/>
            <person name="Kai C."/>
            <person name="Sasaki D."/>
            <person name="Tomaru Y."/>
            <person name="Fukuda S."/>
            <person name="Kanamori-Katayama M."/>
            <person name="Suzuki M."/>
            <person name="Aoki J."/>
            <person name="Arakawa T."/>
            <person name="Iida J."/>
            <person name="Imamura K."/>
            <person name="Itoh M."/>
            <person name="Kato T."/>
            <person name="Kawaji H."/>
            <person name="Kawagashira N."/>
            <person name="Kawashima T."/>
            <person name="Kojima M."/>
            <person name="Kondo S."/>
            <person name="Konno H."/>
            <person name="Nakano K."/>
            <person name="Ninomiya N."/>
            <person name="Nishio T."/>
            <person name="Okada M."/>
            <person name="Plessy C."/>
            <person name="Shibata K."/>
            <person name="Shiraki T."/>
            <person name="Suzuki S."/>
            <person name="Tagami M."/>
            <person name="Waki K."/>
            <person name="Watahiki A."/>
            <person name="Okamura-Oho Y."/>
            <person name="Suzuki H."/>
            <person name="Kawai J."/>
            <person name="Hayashizaki Y."/>
        </authorList>
    </citation>
    <scope>NUCLEOTIDE SEQUENCE [LARGE SCALE MRNA]</scope>
    <source>
        <strain>C57BL/6J</strain>
        <tissue>Pancreas</tissue>
        <tissue>Small intestine</tissue>
        <tissue>Stomach</tissue>
    </source>
</reference>
<reference key="2">
    <citation type="journal article" date="2010" name="Cell">
        <title>A tissue-specific atlas of mouse protein phosphorylation and expression.</title>
        <authorList>
            <person name="Huttlin E.L."/>
            <person name="Jedrychowski M.P."/>
            <person name="Elias J.E."/>
            <person name="Goswami T."/>
            <person name="Rad R."/>
            <person name="Beausoleil S.A."/>
            <person name="Villen J."/>
            <person name="Haas W."/>
            <person name="Sowa M.E."/>
            <person name="Gygi S.P."/>
        </authorList>
    </citation>
    <scope>IDENTIFICATION BY MASS SPECTROMETRY [LARGE SCALE ANALYSIS]</scope>
    <source>
        <tissue>Pancreas</tissue>
    </source>
</reference>
<comment type="function">
    <text>This protein binds beta-galactoside. Its physiological function is not yet known.</text>
</comment>
<comment type="subunit">
    <text evidence="1">Homodimer.</text>
</comment>
<protein>
    <recommendedName>
        <fullName>Galectin-2</fullName>
        <shortName>Gal-2</shortName>
    </recommendedName>
</protein>
<accession>Q9CQW5</accession>
<accession>Q9D800</accession>
<accession>Q9D862</accession>
<dbReference type="EMBL" id="AK007364">
    <property type="protein sequence ID" value="BAB24987.1"/>
    <property type="molecule type" value="mRNA"/>
</dbReference>
<dbReference type="EMBL" id="AK008423">
    <property type="protein sequence ID" value="BAB25661.1"/>
    <property type="molecule type" value="mRNA"/>
</dbReference>
<dbReference type="EMBL" id="AK008636">
    <property type="protein sequence ID" value="BAB25797.1"/>
    <property type="molecule type" value="mRNA"/>
</dbReference>
<dbReference type="EMBL" id="AK008648">
    <property type="protein sequence ID" value="BAB25806.1"/>
    <property type="molecule type" value="mRNA"/>
</dbReference>
<dbReference type="CCDS" id="CCDS37135.1"/>
<dbReference type="RefSeq" id="NP_079898.2">
    <property type="nucleotide sequence ID" value="NM_025622.3"/>
</dbReference>
<dbReference type="SMR" id="Q9CQW5"/>
<dbReference type="BioGRID" id="223541">
    <property type="interactions" value="1"/>
</dbReference>
<dbReference type="ComplexPortal" id="CPX-96">
    <property type="entry name" value="Galectin-2 complex"/>
</dbReference>
<dbReference type="FunCoup" id="Q9CQW5">
    <property type="interactions" value="30"/>
</dbReference>
<dbReference type="IntAct" id="Q9CQW5">
    <property type="interactions" value="3"/>
</dbReference>
<dbReference type="STRING" id="10090.ENSMUSP00000036598"/>
<dbReference type="PhosphoSitePlus" id="Q9CQW5"/>
<dbReference type="PaxDb" id="10090-ENSMUSP00000036598"/>
<dbReference type="PeptideAtlas" id="Q9CQW5"/>
<dbReference type="ProteomicsDB" id="264933"/>
<dbReference type="Antibodypedia" id="286">
    <property type="antibodies" value="315 antibodies from 32 providers"/>
</dbReference>
<dbReference type="DNASU" id="107753"/>
<dbReference type="Ensembl" id="ENSMUST00000044584.6">
    <property type="protein sequence ID" value="ENSMUSP00000036598.5"/>
    <property type="gene ID" value="ENSMUSG00000043501.6"/>
</dbReference>
<dbReference type="GeneID" id="107753"/>
<dbReference type="KEGG" id="mmu:107753"/>
<dbReference type="UCSC" id="uc007wrm.2">
    <property type="organism name" value="mouse"/>
</dbReference>
<dbReference type="AGR" id="MGI:895068"/>
<dbReference type="CTD" id="3957"/>
<dbReference type="MGI" id="MGI:895068">
    <property type="gene designation" value="Lgals2"/>
</dbReference>
<dbReference type="VEuPathDB" id="HostDB:ENSMUSG00000043501"/>
<dbReference type="eggNOG" id="KOG3587">
    <property type="taxonomic scope" value="Eukaryota"/>
</dbReference>
<dbReference type="GeneTree" id="ENSGT00940000155025"/>
<dbReference type="HOGENOM" id="CLU_037794_5_0_1"/>
<dbReference type="InParanoid" id="Q9CQW5"/>
<dbReference type="OMA" id="EITNMDM"/>
<dbReference type="OrthoDB" id="8918229at2759"/>
<dbReference type="PhylomeDB" id="Q9CQW5"/>
<dbReference type="TreeFam" id="TF315551"/>
<dbReference type="BioGRID-ORCS" id="107753">
    <property type="hits" value="2 hits in 77 CRISPR screens"/>
</dbReference>
<dbReference type="ChiTaRS" id="Lgals2">
    <property type="organism name" value="mouse"/>
</dbReference>
<dbReference type="PRO" id="PR:Q9CQW5"/>
<dbReference type="Proteomes" id="UP000000589">
    <property type="component" value="Chromosome 15"/>
</dbReference>
<dbReference type="RNAct" id="Q9CQW5">
    <property type="molecule type" value="protein"/>
</dbReference>
<dbReference type="Bgee" id="ENSMUSG00000043501">
    <property type="expression patterns" value="Expressed in mucosa of stomach and 105 other cell types or tissues"/>
</dbReference>
<dbReference type="GO" id="GO:1990724">
    <property type="term" value="C:galectin complex"/>
    <property type="evidence" value="ECO:0000266"/>
    <property type="project" value="ComplexPortal"/>
</dbReference>
<dbReference type="GO" id="GO:0030246">
    <property type="term" value="F:carbohydrate binding"/>
    <property type="evidence" value="ECO:0007669"/>
    <property type="project" value="UniProtKB-KW"/>
</dbReference>
<dbReference type="GO" id="GO:0098609">
    <property type="term" value="P:cell-cell adhesion"/>
    <property type="evidence" value="ECO:0000266"/>
    <property type="project" value="ComplexPortal"/>
</dbReference>
<dbReference type="GO" id="GO:0043065">
    <property type="term" value="P:positive regulation of apoptotic process"/>
    <property type="evidence" value="ECO:0007669"/>
    <property type="project" value="Ensembl"/>
</dbReference>
<dbReference type="GO" id="GO:0050729">
    <property type="term" value="P:positive regulation of inflammatory response"/>
    <property type="evidence" value="ECO:0000314"/>
    <property type="project" value="ComplexPortal"/>
</dbReference>
<dbReference type="GO" id="GO:0043029">
    <property type="term" value="P:T cell homeostasis"/>
    <property type="evidence" value="ECO:0000266"/>
    <property type="project" value="ComplexPortal"/>
</dbReference>
<dbReference type="CDD" id="cd00070">
    <property type="entry name" value="GLECT"/>
    <property type="match status" value="1"/>
</dbReference>
<dbReference type="FunFam" id="2.60.120.200:FF:000021">
    <property type="entry name" value="Galectin"/>
    <property type="match status" value="1"/>
</dbReference>
<dbReference type="Gene3D" id="2.60.120.200">
    <property type="match status" value="1"/>
</dbReference>
<dbReference type="InterPro" id="IPR013320">
    <property type="entry name" value="ConA-like_dom_sf"/>
</dbReference>
<dbReference type="InterPro" id="IPR044156">
    <property type="entry name" value="Galectin-like"/>
</dbReference>
<dbReference type="InterPro" id="IPR001079">
    <property type="entry name" value="Galectin_CRD"/>
</dbReference>
<dbReference type="PANTHER" id="PTHR11346">
    <property type="entry name" value="GALECTIN"/>
    <property type="match status" value="1"/>
</dbReference>
<dbReference type="PANTHER" id="PTHR11346:SF104">
    <property type="entry name" value="GALECTIN-2"/>
    <property type="match status" value="1"/>
</dbReference>
<dbReference type="Pfam" id="PF00337">
    <property type="entry name" value="Gal-bind_lectin"/>
    <property type="match status" value="1"/>
</dbReference>
<dbReference type="SMART" id="SM00908">
    <property type="entry name" value="Gal-bind_lectin"/>
    <property type="match status" value="1"/>
</dbReference>
<dbReference type="SMART" id="SM00276">
    <property type="entry name" value="GLECT"/>
    <property type="match status" value="1"/>
</dbReference>
<dbReference type="SUPFAM" id="SSF49899">
    <property type="entry name" value="Concanavalin A-like lectins/glucanases"/>
    <property type="match status" value="1"/>
</dbReference>
<dbReference type="PROSITE" id="PS51304">
    <property type="entry name" value="GALECTIN"/>
    <property type="match status" value="1"/>
</dbReference>
<gene>
    <name type="primary">Lgals2</name>
</gene>
<name>LEG2_MOUSE</name>
<feature type="chain" id="PRO_0000076925" description="Galectin-2">
    <location>
        <begin position="1"/>
        <end position="130"/>
    </location>
</feature>
<feature type="domain" description="Galectin" evidence="3">
    <location>
        <begin position="4"/>
        <end position="130"/>
    </location>
</feature>
<feature type="binding site" evidence="2">
    <location>
        <begin position="65"/>
        <end position="71"/>
    </location>
    <ligand>
        <name>a beta-D-galactoside</name>
        <dbReference type="ChEBI" id="CHEBI:28034"/>
    </ligand>
</feature>
<feature type="sequence conflict" description="In Ref. 1; BAB25806." evidence="4" ref="1">
    <original>G</original>
    <variation>V</variation>
    <location>
        <position position="36"/>
    </location>
</feature>
<feature type="sequence conflict" description="In Ref. 1; BAB25661." evidence="4" ref="1">
    <original>P</original>
    <variation>R</variation>
    <location>
        <position position="106"/>
    </location>
</feature>
<evidence type="ECO:0000250" key="1"/>
<evidence type="ECO:0000255" key="2"/>
<evidence type="ECO:0000255" key="3">
    <source>
        <dbReference type="PROSITE-ProRule" id="PRU00639"/>
    </source>
</evidence>
<evidence type="ECO:0000305" key="4"/>
<keyword id="KW-0430">Lectin</keyword>
<keyword id="KW-1185">Reference proteome</keyword>
<proteinExistence type="evidence at protein level"/>